<accession>P13908</accession>
<comment type="function">
    <text>After binding acetylcholine, the AChR responds by an extensive change in conformation that affects all subunits and leads to opening of an ion-conducting channel across the plasma membrane.</text>
</comment>
<comment type="subunit">
    <text>Neuronal AChR seems to be composed of two different type of subunits: alpha and beta.</text>
</comment>
<comment type="subcellular location">
    <subcellularLocation>
        <location>Postsynaptic cell membrane</location>
        <topology>Multi-pass membrane protein</topology>
    </subcellularLocation>
    <subcellularLocation>
        <location>Cell membrane</location>
        <topology>Multi-pass membrane protein</topology>
    </subcellularLocation>
</comment>
<comment type="similarity">
    <text evidence="4">Belongs to the ligand-gated ion channel (TC 1.A.9) family. Acetylcholine receptor (TC 1.A.9.1) subfamily.</text>
</comment>
<sequence length="462" mass="53195">MTLAVIGLFTLFTSIIAITPAREFVSLAEREDALLRELFQGYQRWVRPVQHANHSVKVRFGLKISQLVDVDEKNQLMTTNVWLWQEWLDYKLRWNPENYGGITSIRVPSESIWLPDIVLYENADGRFEGSLMTKAIVRYNGMITWTPPASYKSACTMDVTFFPFDRQNCSMKFGSWTYDGNMVKLVLINQQVDRSDFFDNGEWEILSATGVKGSRQDSHLSYPYITYSFILKRLPLFYTLFLIIPCLGLSFLTVLVFYLPSDEGEKVSLSTSVLVSLTVFLLVIEEIIPSSSKVIPLIGEYLLFIMIFVTLSIIVTIFVINVHHRSSATYHPMSPWVRSLFLQRLPHLLCMRGNTDRYHYPELEPHSPDLKPRNKKGPPGPEGEGQALINLLEQATNSVRYISRHIKKEHFIREVVQDWKFVAQVLDRIFLWTFLTVSVLGTILIFTPALKMFLRTPPPPSP</sequence>
<dbReference type="EMBL" id="X14786">
    <property type="protein sequence ID" value="CAA32888.1"/>
    <property type="molecule type" value="mRNA"/>
</dbReference>
<dbReference type="PIR" id="S06893">
    <property type="entry name" value="S06893"/>
</dbReference>
<dbReference type="RefSeq" id="XP_026136630.1">
    <property type="nucleotide sequence ID" value="XM_026280845.1"/>
</dbReference>
<dbReference type="SMR" id="P13908"/>
<dbReference type="GeneID" id="113114101"/>
<dbReference type="OrthoDB" id="5975154at2759"/>
<dbReference type="Proteomes" id="UP000515129">
    <property type="component" value="Chromosome 14"/>
</dbReference>
<dbReference type="GO" id="GO:0045211">
    <property type="term" value="C:postsynaptic membrane"/>
    <property type="evidence" value="ECO:0007669"/>
    <property type="project" value="UniProtKB-SubCell"/>
</dbReference>
<dbReference type="GO" id="GO:0022848">
    <property type="term" value="F:acetylcholine-gated monoatomic cation-selective channel activity"/>
    <property type="evidence" value="ECO:0007669"/>
    <property type="project" value="InterPro"/>
</dbReference>
<dbReference type="GO" id="GO:0004888">
    <property type="term" value="F:transmembrane signaling receptor activity"/>
    <property type="evidence" value="ECO:0007669"/>
    <property type="project" value="InterPro"/>
</dbReference>
<dbReference type="CDD" id="cd19064">
    <property type="entry name" value="LGIC_TM_nAChR"/>
    <property type="match status" value="1"/>
</dbReference>
<dbReference type="FunFam" id="1.20.58.390:FF:000025">
    <property type="entry name" value="Cholinergic receptor nicotinic beta 3 subunit"/>
    <property type="match status" value="1"/>
</dbReference>
<dbReference type="FunFam" id="2.70.170.10:FF:000005">
    <property type="entry name" value="Neuronal nicotinic acetylcholine receptor alpha4 subunit"/>
    <property type="match status" value="1"/>
</dbReference>
<dbReference type="FunFam" id="1.20.58.390:FF:000001">
    <property type="entry name" value="Neuronal nicotinic acetylcholine receptor subunit 3"/>
    <property type="match status" value="1"/>
</dbReference>
<dbReference type="Gene3D" id="2.70.170.10">
    <property type="entry name" value="Neurotransmitter-gated ion-channel ligand-binding domain"/>
    <property type="match status" value="1"/>
</dbReference>
<dbReference type="Gene3D" id="1.20.58.390">
    <property type="entry name" value="Neurotransmitter-gated ion-channel transmembrane domain"/>
    <property type="match status" value="2"/>
</dbReference>
<dbReference type="InterPro" id="IPR006202">
    <property type="entry name" value="Neur_chan_lig-bd"/>
</dbReference>
<dbReference type="InterPro" id="IPR036734">
    <property type="entry name" value="Neur_chan_lig-bd_sf"/>
</dbReference>
<dbReference type="InterPro" id="IPR006201">
    <property type="entry name" value="Neur_channel"/>
</dbReference>
<dbReference type="InterPro" id="IPR036719">
    <property type="entry name" value="Neuro-gated_channel_TM_sf"/>
</dbReference>
<dbReference type="InterPro" id="IPR038050">
    <property type="entry name" value="Neuro_actylchol_rec"/>
</dbReference>
<dbReference type="InterPro" id="IPR006029">
    <property type="entry name" value="Neurotrans-gated_channel_TM"/>
</dbReference>
<dbReference type="InterPro" id="IPR018000">
    <property type="entry name" value="Neurotransmitter_ion_chnl_CS"/>
</dbReference>
<dbReference type="InterPro" id="IPR002394">
    <property type="entry name" value="Nicotinic_acetylcholine_rcpt"/>
</dbReference>
<dbReference type="NCBIfam" id="TIGR00860">
    <property type="entry name" value="LIC"/>
    <property type="match status" value="1"/>
</dbReference>
<dbReference type="PANTHER" id="PTHR18945">
    <property type="entry name" value="NEUROTRANSMITTER GATED ION CHANNEL"/>
    <property type="match status" value="1"/>
</dbReference>
<dbReference type="Pfam" id="PF02931">
    <property type="entry name" value="Neur_chan_LBD"/>
    <property type="match status" value="1"/>
</dbReference>
<dbReference type="Pfam" id="PF02932">
    <property type="entry name" value="Neur_chan_memb"/>
    <property type="match status" value="1"/>
</dbReference>
<dbReference type="PRINTS" id="PR00254">
    <property type="entry name" value="NICOTINICR"/>
</dbReference>
<dbReference type="PRINTS" id="PR00252">
    <property type="entry name" value="NRIONCHANNEL"/>
</dbReference>
<dbReference type="SUPFAM" id="SSF90112">
    <property type="entry name" value="Neurotransmitter-gated ion-channel transmembrane pore"/>
    <property type="match status" value="1"/>
</dbReference>
<dbReference type="SUPFAM" id="SSF63712">
    <property type="entry name" value="Nicotinic receptor ligand binding domain-like"/>
    <property type="match status" value="1"/>
</dbReference>
<dbReference type="PROSITE" id="PS00236">
    <property type="entry name" value="NEUROTR_ION_CHANNEL"/>
    <property type="match status" value="1"/>
</dbReference>
<evidence type="ECO:0000250" key="1"/>
<evidence type="ECO:0000255" key="2"/>
<evidence type="ECO:0000256" key="3">
    <source>
        <dbReference type="SAM" id="MobiDB-lite"/>
    </source>
</evidence>
<evidence type="ECO:0000305" key="4"/>
<reference key="1">
    <citation type="journal article" date="1989" name="J. Cell Biol.">
        <title>Identification of a novel nicotinic acetylcholine receptor structural subunit expressed in goldfish retina.</title>
        <authorList>
            <person name="Cauley K."/>
            <person name="Agranoff B.W."/>
            <person name="Goldman D."/>
        </authorList>
    </citation>
    <scope>NUCLEOTIDE SEQUENCE [MRNA]</scope>
    <source>
        <tissue>Retina</tissue>
    </source>
</reference>
<organism>
    <name type="scientific">Carassius auratus</name>
    <name type="common">Goldfish</name>
    <dbReference type="NCBI Taxonomy" id="7957"/>
    <lineage>
        <taxon>Eukaryota</taxon>
        <taxon>Metazoa</taxon>
        <taxon>Chordata</taxon>
        <taxon>Craniata</taxon>
        <taxon>Vertebrata</taxon>
        <taxon>Euteleostomi</taxon>
        <taxon>Actinopterygii</taxon>
        <taxon>Neopterygii</taxon>
        <taxon>Teleostei</taxon>
        <taxon>Ostariophysi</taxon>
        <taxon>Cypriniformes</taxon>
        <taxon>Cyprinidae</taxon>
        <taxon>Cyprininae</taxon>
        <taxon>Carassius</taxon>
    </lineage>
</organism>
<name>ACHN2_CARAU</name>
<proteinExistence type="evidence at transcript level"/>
<feature type="signal peptide">
    <location>
        <begin position="1"/>
        <end position="30"/>
    </location>
</feature>
<feature type="chain" id="PRO_0000000393" description="Neuronal acetylcholine receptor subunit non-alpha-2">
    <location>
        <begin position="31"/>
        <end position="462"/>
    </location>
</feature>
<feature type="topological domain" description="Extracellular">
    <location>
        <begin position="31"/>
        <end position="234"/>
    </location>
</feature>
<feature type="transmembrane region" description="Helical">
    <location>
        <begin position="235"/>
        <end position="259"/>
    </location>
</feature>
<feature type="transmembrane region" description="Helical">
    <location>
        <begin position="267"/>
        <end position="284"/>
    </location>
</feature>
<feature type="transmembrane region" description="Helical">
    <location>
        <begin position="301"/>
        <end position="322"/>
    </location>
</feature>
<feature type="topological domain" description="Cytoplasmic">
    <location>
        <begin position="323"/>
        <end position="428"/>
    </location>
</feature>
<feature type="transmembrane region" description="Helical">
    <location>
        <begin position="429"/>
        <end position="446"/>
    </location>
</feature>
<feature type="region of interest" description="Disordered" evidence="3">
    <location>
        <begin position="362"/>
        <end position="384"/>
    </location>
</feature>
<feature type="compositionally biased region" description="Basic and acidic residues" evidence="3">
    <location>
        <begin position="362"/>
        <end position="372"/>
    </location>
</feature>
<feature type="glycosylation site" description="N-linked (GlcNAc...) asparagine" evidence="2">
    <location>
        <position position="53"/>
    </location>
</feature>
<feature type="glycosylation site" description="N-linked (GlcNAc...) asparagine" evidence="2">
    <location>
        <position position="168"/>
    </location>
</feature>
<feature type="disulfide bond" evidence="1">
    <location>
        <begin position="155"/>
        <end position="169"/>
    </location>
</feature>
<keyword id="KW-1003">Cell membrane</keyword>
<keyword id="KW-1015">Disulfide bond</keyword>
<keyword id="KW-0325">Glycoprotein</keyword>
<keyword id="KW-0407">Ion channel</keyword>
<keyword id="KW-0406">Ion transport</keyword>
<keyword id="KW-1071">Ligand-gated ion channel</keyword>
<keyword id="KW-0472">Membrane</keyword>
<keyword id="KW-0628">Postsynaptic cell membrane</keyword>
<keyword id="KW-0675">Receptor</keyword>
<keyword id="KW-1185">Reference proteome</keyword>
<keyword id="KW-0732">Signal</keyword>
<keyword id="KW-0770">Synapse</keyword>
<keyword id="KW-0812">Transmembrane</keyword>
<keyword id="KW-1133">Transmembrane helix</keyword>
<keyword id="KW-0813">Transport</keyword>
<protein>
    <recommendedName>
        <fullName>Neuronal acetylcholine receptor subunit non-alpha-2</fullName>
    </recommendedName>
    <alternativeName>
        <fullName>GFN-alpha-2</fullName>
    </alternativeName>
</protein>